<protein>
    <recommendedName>
        <fullName>RanBP-type and C3HC4-type zinc finger-containing protein 1</fullName>
        <ecNumber evidence="2">2.3.2.31</ecNumber>
    </recommendedName>
    <alternativeName>
        <fullName>Heme-oxidized IRP2 ubiquitin ligase 1 homolog</fullName>
        <shortName>HOIL-1</shortName>
    </alternativeName>
    <alternativeName>
        <fullName evidence="12">RING-type E3 ubiquitin transferase HOIL-1</fullName>
    </alternativeName>
    <alternativeName>
        <fullName>UbcM4-interacting protein 28</fullName>
    </alternativeName>
    <alternativeName>
        <fullName>Ubiquitin-conjugating enzyme 7-interacting protein 3</fullName>
    </alternativeName>
</protein>
<gene>
    <name type="primary">Rbck1</name>
    <name type="synonym">Rbck</name>
    <name type="synonym">Ubce7ip3</name>
    <name type="synonym">Uip28</name>
</gene>
<comment type="function">
    <text evidence="2">E3 ubiquitin-protein ligase, which accepts ubiquitin from specific E2 ubiquitin-conjugating enzymes, such as UBE2L3/UBCM4, and then transfers it to substrates. Functions as an E3 ligase for oxidized IREB2 and both heme and oxygen are necessary for IREB2 ubiquitination. Promotes ubiquitination of TAB2 and IRF3 and their degradation by the proteasome. Component of the LUBAC complex which conjugates linear ('Met-1'-linked) polyubiquitin chains to substrates and plays a key role in NF-kappa-B activation and regulation of inflammation. LUBAC conjugates linear polyubiquitin to IKBKG and RIPK1 and is involved in activation of the canonical NF-kappa-B and the JNK signaling pathways. Linear ubiquitination mediated by the LUBAC complex interferes with TNF-induced cell death and thereby prevents inflammation. LUBAC is recruited to the TNF-R1 signaling complex (TNF-RSC) following polyubiquitination of TNF-RSC components by BIRC2 and/or BIRC3 and to conjugate linear polyubiquitin to IKBKG and possibly other components contributing to the stability of the complex. The LUBAC complex is also involved in innate immunity by conjugating linear polyubiquitin chains at the surface of bacteria invading the cytosol to form the ubiquitin coat surrounding bacteria. LUBAC is not able to initiate formation of the bacterial ubiquitin coat, and can only promote formation of linear polyubiquitins on pre-existing ubiquitin. The bacterial ubiquitin coat acts as an 'eat-me' signal for xenophagy and promotes NF-kappa-B activation. Together with OTULIN, the LUBAC complex regulates the canonical Wnt signaling during angiogenesis. Binds polyubiquitin of different linkage types.</text>
</comment>
<comment type="catalytic activity">
    <reaction evidence="2">
        <text>[E2 ubiquitin-conjugating enzyme]-S-ubiquitinyl-L-cysteine + [acceptor protein]-L-lysine = [E2 ubiquitin-conjugating enzyme]-L-cysteine + [acceptor protein]-N(6)-ubiquitinyl-L-lysine.</text>
        <dbReference type="EC" id="2.3.2.31"/>
    </reaction>
</comment>
<comment type="pathway">
    <text evidence="2">Protein modification; protein ubiquitination.</text>
</comment>
<comment type="subunit">
    <text evidence="1 2 8 10">Component of the LUBAC complex (linear ubiquitin chain assembly complex) which consists of SHARPIN, RBCK1 and RNF31. LUBAC has a MW of approximately 600 kDa suggesting a heteromultimeric assembly of its subunits (By similarity). Interacts with beta-I-type (PRKCB1) and zeta-type protein kinase C (PRKCZ) (By similarity). Interacts with UBE2L3 (PubMed:10431818). Interacts with IREB2 only in iron-rich conditions. Associates with the TNF-R1 signaling complex (TNF-RSC) in a stimulation-dependent manner. Interacts with EYA1, TAB2, TAB3, MAP3K7 TRAF6 and RIPK1 (PubMed:20956555). Interacts with IRF3 (By similarity).</text>
</comment>
<comment type="interaction">
    <interactant intactId="EBI-6141072">
        <id>Q9WUB0</id>
    </interactant>
    <interactant intactId="EBI-1368503">
        <id>P97767</id>
        <label>Eya1</label>
    </interactant>
    <organismsDiffer>false</organismsDiffer>
    <experiments>2</experiments>
</comment>
<comment type="interaction">
    <interactant intactId="EBI-6141072">
        <id>Q9WUB0</id>
    </interactant>
    <interactant intactId="EBI-647680">
        <id>Q924T7</id>
        <label>Rnf31</label>
    </interactant>
    <organismsDiffer>false</organismsDiffer>
    <experiments>10</experiments>
</comment>
<comment type="domain">
    <text evidence="11">The RanBP2-type zinc finger, also called Npl4 zinc finger (NZF), mediates binding to 'Met-1'-linked polyubiquitins.</text>
</comment>
<comment type="domain">
    <text evidence="2">The UBL domain mediates association with RNF31 via interaction with its UBA domain.</text>
</comment>
<comment type="PTM">
    <text evidence="1">Auto-ubiquitinated. Auto-ubiquitination leads to degradation by the proteasome (By similarity).</text>
</comment>
<comment type="PTM">
    <text evidence="1">Phosphorylated. In vitro, phosphorylation inhibits auto-ubiquitination activity (By similarity).</text>
</comment>
<comment type="disruption phenotype">
    <text evidence="9">Impaired TNF-alpha-mediated NF-kappa-B activation and enhanced JNK-mediated apoptosis.</text>
</comment>
<comment type="similarity">
    <text evidence="12">Belongs to the RBR family.</text>
</comment>
<comment type="sequence caution" evidence="12">
    <conflict type="erroneous initiation">
        <sequence resource="EMBL-CDS" id="AAD24572"/>
    </conflict>
</comment>
<comment type="sequence caution" evidence="12">
    <conflict type="erroneous initiation">
        <sequence resource="EMBL-CDS" id="AAH34555"/>
    </conflict>
</comment>
<reference key="1">
    <citation type="journal article" date="2005" name="Science">
        <title>The transcriptional landscape of the mammalian genome.</title>
        <authorList>
            <person name="Carninci P."/>
            <person name="Kasukawa T."/>
            <person name="Katayama S."/>
            <person name="Gough J."/>
            <person name="Frith M.C."/>
            <person name="Maeda N."/>
            <person name="Oyama R."/>
            <person name="Ravasi T."/>
            <person name="Lenhard B."/>
            <person name="Wells C."/>
            <person name="Kodzius R."/>
            <person name="Shimokawa K."/>
            <person name="Bajic V.B."/>
            <person name="Brenner S.E."/>
            <person name="Batalov S."/>
            <person name="Forrest A.R."/>
            <person name="Zavolan M."/>
            <person name="Davis M.J."/>
            <person name="Wilming L.G."/>
            <person name="Aidinis V."/>
            <person name="Allen J.E."/>
            <person name="Ambesi-Impiombato A."/>
            <person name="Apweiler R."/>
            <person name="Aturaliya R.N."/>
            <person name="Bailey T.L."/>
            <person name="Bansal M."/>
            <person name="Baxter L."/>
            <person name="Beisel K.W."/>
            <person name="Bersano T."/>
            <person name="Bono H."/>
            <person name="Chalk A.M."/>
            <person name="Chiu K.P."/>
            <person name="Choudhary V."/>
            <person name="Christoffels A."/>
            <person name="Clutterbuck D.R."/>
            <person name="Crowe M.L."/>
            <person name="Dalla E."/>
            <person name="Dalrymple B.P."/>
            <person name="de Bono B."/>
            <person name="Della Gatta G."/>
            <person name="di Bernardo D."/>
            <person name="Down T."/>
            <person name="Engstrom P."/>
            <person name="Fagiolini M."/>
            <person name="Faulkner G."/>
            <person name="Fletcher C.F."/>
            <person name="Fukushima T."/>
            <person name="Furuno M."/>
            <person name="Futaki S."/>
            <person name="Gariboldi M."/>
            <person name="Georgii-Hemming P."/>
            <person name="Gingeras T.R."/>
            <person name="Gojobori T."/>
            <person name="Green R.E."/>
            <person name="Gustincich S."/>
            <person name="Harbers M."/>
            <person name="Hayashi Y."/>
            <person name="Hensch T.K."/>
            <person name="Hirokawa N."/>
            <person name="Hill D."/>
            <person name="Huminiecki L."/>
            <person name="Iacono M."/>
            <person name="Ikeo K."/>
            <person name="Iwama A."/>
            <person name="Ishikawa T."/>
            <person name="Jakt M."/>
            <person name="Kanapin A."/>
            <person name="Katoh M."/>
            <person name="Kawasawa Y."/>
            <person name="Kelso J."/>
            <person name="Kitamura H."/>
            <person name="Kitano H."/>
            <person name="Kollias G."/>
            <person name="Krishnan S.P."/>
            <person name="Kruger A."/>
            <person name="Kummerfeld S.K."/>
            <person name="Kurochkin I.V."/>
            <person name="Lareau L.F."/>
            <person name="Lazarevic D."/>
            <person name="Lipovich L."/>
            <person name="Liu J."/>
            <person name="Liuni S."/>
            <person name="McWilliam S."/>
            <person name="Madan Babu M."/>
            <person name="Madera M."/>
            <person name="Marchionni L."/>
            <person name="Matsuda H."/>
            <person name="Matsuzawa S."/>
            <person name="Miki H."/>
            <person name="Mignone F."/>
            <person name="Miyake S."/>
            <person name="Morris K."/>
            <person name="Mottagui-Tabar S."/>
            <person name="Mulder N."/>
            <person name="Nakano N."/>
            <person name="Nakauchi H."/>
            <person name="Ng P."/>
            <person name="Nilsson R."/>
            <person name="Nishiguchi S."/>
            <person name="Nishikawa S."/>
            <person name="Nori F."/>
            <person name="Ohara O."/>
            <person name="Okazaki Y."/>
            <person name="Orlando V."/>
            <person name="Pang K.C."/>
            <person name="Pavan W.J."/>
            <person name="Pavesi G."/>
            <person name="Pesole G."/>
            <person name="Petrovsky N."/>
            <person name="Piazza S."/>
            <person name="Reed J."/>
            <person name="Reid J.F."/>
            <person name="Ring B.Z."/>
            <person name="Ringwald M."/>
            <person name="Rost B."/>
            <person name="Ruan Y."/>
            <person name="Salzberg S.L."/>
            <person name="Sandelin A."/>
            <person name="Schneider C."/>
            <person name="Schoenbach C."/>
            <person name="Sekiguchi K."/>
            <person name="Semple C.A."/>
            <person name="Seno S."/>
            <person name="Sessa L."/>
            <person name="Sheng Y."/>
            <person name="Shibata Y."/>
            <person name="Shimada H."/>
            <person name="Shimada K."/>
            <person name="Silva D."/>
            <person name="Sinclair B."/>
            <person name="Sperling S."/>
            <person name="Stupka E."/>
            <person name="Sugiura K."/>
            <person name="Sultana R."/>
            <person name="Takenaka Y."/>
            <person name="Taki K."/>
            <person name="Tammoja K."/>
            <person name="Tan S.L."/>
            <person name="Tang S."/>
            <person name="Taylor M.S."/>
            <person name="Tegner J."/>
            <person name="Teichmann S.A."/>
            <person name="Ueda H.R."/>
            <person name="van Nimwegen E."/>
            <person name="Verardo R."/>
            <person name="Wei C.L."/>
            <person name="Yagi K."/>
            <person name="Yamanishi H."/>
            <person name="Zabarovsky E."/>
            <person name="Zhu S."/>
            <person name="Zimmer A."/>
            <person name="Hide W."/>
            <person name="Bult C."/>
            <person name="Grimmond S.M."/>
            <person name="Teasdale R.D."/>
            <person name="Liu E.T."/>
            <person name="Brusic V."/>
            <person name="Quackenbush J."/>
            <person name="Wahlestedt C."/>
            <person name="Mattick J.S."/>
            <person name="Hume D.A."/>
            <person name="Kai C."/>
            <person name="Sasaki D."/>
            <person name="Tomaru Y."/>
            <person name="Fukuda S."/>
            <person name="Kanamori-Katayama M."/>
            <person name="Suzuki M."/>
            <person name="Aoki J."/>
            <person name="Arakawa T."/>
            <person name="Iida J."/>
            <person name="Imamura K."/>
            <person name="Itoh M."/>
            <person name="Kato T."/>
            <person name="Kawaji H."/>
            <person name="Kawagashira N."/>
            <person name="Kawashima T."/>
            <person name="Kojima M."/>
            <person name="Kondo S."/>
            <person name="Konno H."/>
            <person name="Nakano K."/>
            <person name="Ninomiya N."/>
            <person name="Nishio T."/>
            <person name="Okada M."/>
            <person name="Plessy C."/>
            <person name="Shibata K."/>
            <person name="Shiraki T."/>
            <person name="Suzuki S."/>
            <person name="Tagami M."/>
            <person name="Waki K."/>
            <person name="Watahiki A."/>
            <person name="Okamura-Oho Y."/>
            <person name="Suzuki H."/>
            <person name="Kawai J."/>
            <person name="Hayashizaki Y."/>
        </authorList>
    </citation>
    <scope>NUCLEOTIDE SEQUENCE [LARGE SCALE MRNA]</scope>
    <source>
        <strain>NOD</strain>
        <tissue>Lung</tissue>
        <tissue>Thymus</tissue>
    </source>
</reference>
<reference key="2">
    <citation type="journal article" date="2009" name="PLoS Biol.">
        <title>Lineage-specific biology revealed by a finished genome assembly of the mouse.</title>
        <authorList>
            <person name="Church D.M."/>
            <person name="Goodstadt L."/>
            <person name="Hillier L.W."/>
            <person name="Zody M.C."/>
            <person name="Goldstein S."/>
            <person name="She X."/>
            <person name="Bult C.J."/>
            <person name="Agarwala R."/>
            <person name="Cherry J.L."/>
            <person name="DiCuccio M."/>
            <person name="Hlavina W."/>
            <person name="Kapustin Y."/>
            <person name="Meric P."/>
            <person name="Maglott D."/>
            <person name="Birtle Z."/>
            <person name="Marques A.C."/>
            <person name="Graves T."/>
            <person name="Zhou S."/>
            <person name="Teague B."/>
            <person name="Potamousis K."/>
            <person name="Churas C."/>
            <person name="Place M."/>
            <person name="Herschleb J."/>
            <person name="Runnheim R."/>
            <person name="Forrest D."/>
            <person name="Amos-Landgraf J."/>
            <person name="Schwartz D.C."/>
            <person name="Cheng Z."/>
            <person name="Lindblad-Toh K."/>
            <person name="Eichler E.E."/>
            <person name="Ponting C.P."/>
        </authorList>
    </citation>
    <scope>NUCLEOTIDE SEQUENCE [LARGE SCALE GENOMIC DNA]</scope>
    <source>
        <strain>C57BL/6J</strain>
    </source>
</reference>
<reference key="3">
    <citation type="journal article" date="2004" name="Genome Res.">
        <title>The status, quality, and expansion of the NIH full-length cDNA project: the Mammalian Gene Collection (MGC).</title>
        <authorList>
            <consortium name="The MGC Project Team"/>
        </authorList>
    </citation>
    <scope>NUCLEOTIDE SEQUENCE [LARGE SCALE MRNA]</scope>
    <source>
        <strain>FVB/N</strain>
        <tissue>Salivary gland</tissue>
    </source>
</reference>
<reference key="4">
    <citation type="journal article" date="1999" name="FEBS Lett.">
        <title>A family of structurally related RING finger proteins interacts specifically with the ubiquitin-conjugating enzyme UbcM4.</title>
        <authorList>
            <person name="Martinez-Noel G."/>
            <person name="Niedenthal R."/>
            <person name="Tamura T."/>
            <person name="Harbers K."/>
        </authorList>
    </citation>
    <scope>NUCLEOTIDE SEQUENCE [MRNA] OF 8-508</scope>
    <scope>INTERACTION WITH UBE2L3</scope>
    <source>
        <strain>BALB/cJ</strain>
        <tissue>Liver</tissue>
    </source>
</reference>
<reference key="5">
    <citation type="journal article" date="2007" name="J. Immunol.">
        <title>Quantitative time-resolved phosphoproteomic analysis of mast cell signaling.</title>
        <authorList>
            <person name="Cao L."/>
            <person name="Yu K."/>
            <person name="Banh C."/>
            <person name="Nguyen V."/>
            <person name="Ritz A."/>
            <person name="Raphael B.J."/>
            <person name="Kawakami Y."/>
            <person name="Kawakami T."/>
            <person name="Salomon A.R."/>
        </authorList>
    </citation>
    <scope>PHOSPHORYLATION [LARGE SCALE ANALYSIS] AT TYR-328</scope>
    <scope>IDENTIFICATION BY MASS SPECTROMETRY [LARGE SCALE ANALYSIS]</scope>
    <source>
        <tissue>Mast cell</tissue>
    </source>
</reference>
<reference key="6">
    <citation type="journal article" date="2009" name="Nat. Cell Biol.">
        <title>Involvement of linear polyubiquitylation of NEMO in NF-kappaB activation.</title>
        <authorList>
            <person name="Tokunaga F."/>
            <person name="Sakata S."/>
            <person name="Saeki Y."/>
            <person name="Satomi Y."/>
            <person name="Kirisako T."/>
            <person name="Kamei K."/>
            <person name="Nakagawa T."/>
            <person name="Kato M."/>
            <person name="Murata S."/>
            <person name="Yamaoka S."/>
            <person name="Yamamoto M."/>
            <person name="Akira S."/>
            <person name="Takao T."/>
            <person name="Tanaka K."/>
            <person name="Iwai K."/>
        </authorList>
    </citation>
    <scope>DISRUPTION PHENOTYPE</scope>
</reference>
<reference key="7">
    <citation type="journal article" date="2010" name="Cell">
        <title>A tissue-specific atlas of mouse protein phosphorylation and expression.</title>
        <authorList>
            <person name="Huttlin E.L."/>
            <person name="Jedrychowski M.P."/>
            <person name="Elias J.E."/>
            <person name="Goswami T."/>
            <person name="Rad R."/>
            <person name="Beausoleil S.A."/>
            <person name="Villen J."/>
            <person name="Haas W."/>
            <person name="Sowa M.E."/>
            <person name="Gygi S.P."/>
        </authorList>
    </citation>
    <scope>IDENTIFICATION BY MASS SPECTROMETRY [LARGE SCALE ANALYSIS]</scope>
    <source>
        <tissue>Kidney</tissue>
        <tissue>Lung</tissue>
    </source>
</reference>
<reference key="8">
    <citation type="journal article" date="2010" name="Mol. Cell. Biol.">
        <title>Sipl1 and Rbck1 are novel Eya1-binding proteins with a role in craniofacial development.</title>
        <authorList>
            <person name="Landgraf K."/>
            <person name="Bollig F."/>
            <person name="Trowe M.O."/>
            <person name="Besenbeck B."/>
            <person name="Ebert C."/>
            <person name="Kruspe D."/>
            <person name="Kispert A."/>
            <person name="Hanel F."/>
            <person name="Englert C."/>
        </authorList>
    </citation>
    <scope>INTERACTION WITH EYA1</scope>
</reference>
<reference key="9">
    <citation type="journal article" date="2011" name="Proc. Natl. Acad. Sci. U.S.A.">
        <title>Specific recognition of linear ubiquitin chains by the Npl4 zinc finger (NZF) domain of the HOIL-1L subunit of the linear ubiquitin chain assembly complex.</title>
        <authorList>
            <person name="Sato Y."/>
            <person name="Fujita H."/>
            <person name="Yoshikawa A."/>
            <person name="Yamashita M."/>
            <person name="Yamagata A."/>
            <person name="Kaiser S.E."/>
            <person name="Iwai K."/>
            <person name="Fukai S."/>
        </authorList>
    </citation>
    <scope>X-RAY CRYSTALLOGRAPHY (1.7 ANGSTROMS) OF 192-250 IN COMPLEX WITH LINEAR DIUBIQUITIN</scope>
</reference>
<accession>Q9WUB0</accession>
<accession>A2ANR4</accession>
<accession>Q3TM86</accession>
<accession>Q8C2I0</accession>
<name>HOIL1_MOUSE</name>
<evidence type="ECO:0000250" key="1">
    <source>
        <dbReference type="UniProtKB" id="Q62921"/>
    </source>
</evidence>
<evidence type="ECO:0000250" key="2">
    <source>
        <dbReference type="UniProtKB" id="Q9BYM8"/>
    </source>
</evidence>
<evidence type="ECO:0000255" key="3"/>
<evidence type="ECO:0000255" key="4">
    <source>
        <dbReference type="PROSITE-ProRule" id="PRU00214"/>
    </source>
</evidence>
<evidence type="ECO:0000255" key="5">
    <source>
        <dbReference type="PROSITE-ProRule" id="PRU00322"/>
    </source>
</evidence>
<evidence type="ECO:0000255" key="6">
    <source>
        <dbReference type="PROSITE-ProRule" id="PRU01221"/>
    </source>
</evidence>
<evidence type="ECO:0000256" key="7">
    <source>
        <dbReference type="SAM" id="MobiDB-lite"/>
    </source>
</evidence>
<evidence type="ECO:0000269" key="8">
    <source>
    </source>
</evidence>
<evidence type="ECO:0000269" key="9">
    <source>
    </source>
</evidence>
<evidence type="ECO:0000269" key="10">
    <source>
    </source>
</evidence>
<evidence type="ECO:0000269" key="11">
    <source>
    </source>
</evidence>
<evidence type="ECO:0000305" key="12"/>
<evidence type="ECO:0007744" key="13">
    <source>
    </source>
</evidence>
<evidence type="ECO:0007829" key="14">
    <source>
        <dbReference type="PDB" id="3B08"/>
    </source>
</evidence>
<evidence type="ECO:0007829" key="15">
    <source>
        <dbReference type="PDB" id="5Y3T"/>
    </source>
</evidence>
<sequence length="508" mass="57534">MDEKTKKAEEMALSLARAVAGGDEQAAIKYATWLAEQRVPLRVQVKPEVSPTQDIRLCVSVEDAYMHTVTIWLTVRPDMTVASLKDMVFLDYGFPPSLQQWVVGQRLARDQETLHSHGIRRNGDGAYLYLLSARNTSLNPQELQRQRQLRMLEDLGFKDLTLQSRGPLEPVLPKPRTNQEPGQPDAAPESPPVGWQCPGCTFINKPTRPGCEMCCRARPETYQIPASYQPDEEERARLAGEEEALRQYQQRKQQQQEGNYLQHVQLEQRSLVLNTEPTECPVCYSVLAPGEAVVLRECLHTFCRECLQGTIRNSQEAEVACPFIDSTYSCPGKLLEREIRALLSPEDYQRFLDLGVSIAENRSTLSYHCKTPDCRGWCFFEDDVNEFTCPVCTRVNCLLCKAIHEHMNCREYQDDLALRAQNDVAARQTTEMLKVMLQQGEAMHCPQCRIVVQKKDGCDWIRCTVCHTEICWVTKGPRWGPGGPGDTSGGCRCRVNGIPCHPSCQNCH</sequence>
<dbReference type="EC" id="2.3.2.31" evidence="2"/>
<dbReference type="EMBL" id="AK088591">
    <property type="protein sequence ID" value="BAC40440.1"/>
    <property type="molecule type" value="mRNA"/>
</dbReference>
<dbReference type="EMBL" id="AK166075">
    <property type="protein sequence ID" value="BAE38556.1"/>
    <property type="molecule type" value="mRNA"/>
</dbReference>
<dbReference type="EMBL" id="AL831735">
    <property type="status" value="NOT_ANNOTATED_CDS"/>
    <property type="molecule type" value="Genomic_DNA"/>
</dbReference>
<dbReference type="EMBL" id="AL928568">
    <property type="status" value="NOT_ANNOTATED_CDS"/>
    <property type="molecule type" value="Genomic_DNA"/>
</dbReference>
<dbReference type="EMBL" id="BC034555">
    <property type="protein sequence ID" value="AAH34555.1"/>
    <property type="status" value="ALT_INIT"/>
    <property type="molecule type" value="mRNA"/>
</dbReference>
<dbReference type="EMBL" id="AF124663">
    <property type="protein sequence ID" value="AAD24572.1"/>
    <property type="status" value="ALT_INIT"/>
    <property type="molecule type" value="mRNA"/>
</dbReference>
<dbReference type="CCDS" id="CCDS38273.1"/>
<dbReference type="RefSeq" id="NP_001077390.1">
    <property type="nucleotide sequence ID" value="NM_001083921.2"/>
</dbReference>
<dbReference type="RefSeq" id="NP_062679.2">
    <property type="nucleotide sequence ID" value="NM_019705.4"/>
</dbReference>
<dbReference type="PDB" id="3B08">
    <property type="method" value="X-ray"/>
    <property type="resolution" value="1.70 A"/>
    <property type="chains" value="B/E/H/K=192-250"/>
</dbReference>
<dbReference type="PDB" id="3B0A">
    <property type="method" value="X-ray"/>
    <property type="resolution" value="1.90 A"/>
    <property type="chains" value="B/E=192-250"/>
</dbReference>
<dbReference type="PDB" id="5Y3T">
    <property type="method" value="X-ray"/>
    <property type="resolution" value="2.40 A"/>
    <property type="chains" value="A=1-140"/>
</dbReference>
<dbReference type="PDB" id="8IM5">
    <property type="method" value="NMR"/>
    <property type="chains" value="A=192-250"/>
</dbReference>
<dbReference type="PDBsum" id="3B08"/>
<dbReference type="PDBsum" id="3B0A"/>
<dbReference type="PDBsum" id="5Y3T"/>
<dbReference type="PDBsum" id="8IM5"/>
<dbReference type="SMR" id="Q9WUB0"/>
<dbReference type="BioGRID" id="204899">
    <property type="interactions" value="16"/>
</dbReference>
<dbReference type="DIP" id="DIP-59198N"/>
<dbReference type="FunCoup" id="Q9WUB0">
    <property type="interactions" value="166"/>
</dbReference>
<dbReference type="IntAct" id="Q9WUB0">
    <property type="interactions" value="4"/>
</dbReference>
<dbReference type="MINT" id="Q9WUB0"/>
<dbReference type="STRING" id="10090.ENSMUSP00000105473"/>
<dbReference type="iPTMnet" id="Q9WUB0"/>
<dbReference type="PhosphoSitePlus" id="Q9WUB0"/>
<dbReference type="SwissPalm" id="Q9WUB0"/>
<dbReference type="PaxDb" id="10090-ENSMUSP00000105473"/>
<dbReference type="PeptideAtlas" id="Q9WUB0"/>
<dbReference type="ProteomicsDB" id="267013"/>
<dbReference type="Pumba" id="Q9WUB0"/>
<dbReference type="Antibodypedia" id="6164">
    <property type="antibodies" value="295 antibodies from 29 providers"/>
</dbReference>
<dbReference type="DNASU" id="24105"/>
<dbReference type="Ensembl" id="ENSMUST00000028964.14">
    <property type="protein sequence ID" value="ENSMUSP00000028964.8"/>
    <property type="gene ID" value="ENSMUSG00000027466.16"/>
</dbReference>
<dbReference type="Ensembl" id="ENSMUST00000109847.9">
    <property type="protein sequence ID" value="ENSMUSP00000105473.3"/>
    <property type="gene ID" value="ENSMUSG00000027466.16"/>
</dbReference>
<dbReference type="GeneID" id="24105"/>
<dbReference type="KEGG" id="mmu:24105"/>
<dbReference type="UCSC" id="uc008nfd.1">
    <property type="organism name" value="mouse"/>
</dbReference>
<dbReference type="AGR" id="MGI:1344372"/>
<dbReference type="CTD" id="10616"/>
<dbReference type="MGI" id="MGI:1344372">
    <property type="gene designation" value="Rbck1"/>
</dbReference>
<dbReference type="VEuPathDB" id="HostDB:ENSMUSG00000027466"/>
<dbReference type="eggNOG" id="KOG1815">
    <property type="taxonomic scope" value="Eukaryota"/>
</dbReference>
<dbReference type="GeneTree" id="ENSGT00940000161130"/>
<dbReference type="HOGENOM" id="CLU_014998_1_0_1"/>
<dbReference type="InParanoid" id="Q9WUB0"/>
<dbReference type="OMA" id="CRCRMNG"/>
<dbReference type="OrthoDB" id="261960at2759"/>
<dbReference type="PhylomeDB" id="Q9WUB0"/>
<dbReference type="TreeFam" id="TF323486"/>
<dbReference type="Reactome" id="R-MMU-5357786">
    <property type="pathway name" value="TNFR1-induced proapoptotic signaling"/>
</dbReference>
<dbReference type="Reactome" id="R-MMU-5357905">
    <property type="pathway name" value="Regulation of TNFR1 signaling"/>
</dbReference>
<dbReference type="Reactome" id="R-MMU-5357956">
    <property type="pathway name" value="TNFR1-induced NF-kappa-B signaling pathway"/>
</dbReference>
<dbReference type="Reactome" id="R-MMU-983168">
    <property type="pathway name" value="Antigen processing: Ubiquitination &amp; Proteasome degradation"/>
</dbReference>
<dbReference type="UniPathway" id="UPA00143"/>
<dbReference type="BioGRID-ORCS" id="24105">
    <property type="hits" value="30 hits in 80 CRISPR screens"/>
</dbReference>
<dbReference type="ChiTaRS" id="Rbck1">
    <property type="organism name" value="mouse"/>
</dbReference>
<dbReference type="EvolutionaryTrace" id="Q9WUB0"/>
<dbReference type="PRO" id="PR:Q9WUB0"/>
<dbReference type="Proteomes" id="UP000000589">
    <property type="component" value="Chromosome 2"/>
</dbReference>
<dbReference type="RNAct" id="Q9WUB0">
    <property type="molecule type" value="protein"/>
</dbReference>
<dbReference type="Bgee" id="ENSMUSG00000027466">
    <property type="expression patterns" value="Expressed in retinal neural layer and 271 other cell types or tissues"/>
</dbReference>
<dbReference type="ExpressionAtlas" id="Q9WUB0">
    <property type="expression patterns" value="baseline and differential"/>
</dbReference>
<dbReference type="GO" id="GO:0071797">
    <property type="term" value="C:LUBAC complex"/>
    <property type="evidence" value="ECO:0000314"/>
    <property type="project" value="MGI"/>
</dbReference>
<dbReference type="GO" id="GO:0042802">
    <property type="term" value="F:identical protein binding"/>
    <property type="evidence" value="ECO:0007669"/>
    <property type="project" value="Ensembl"/>
</dbReference>
<dbReference type="GO" id="GO:0043130">
    <property type="term" value="F:ubiquitin binding"/>
    <property type="evidence" value="ECO:0000250"/>
    <property type="project" value="UniProtKB"/>
</dbReference>
<dbReference type="GO" id="GO:1990757">
    <property type="term" value="F:ubiquitin ligase activator activity"/>
    <property type="evidence" value="ECO:0000314"/>
    <property type="project" value="MGI"/>
</dbReference>
<dbReference type="GO" id="GO:0004842">
    <property type="term" value="F:ubiquitin-protein transferase activity"/>
    <property type="evidence" value="ECO:0007669"/>
    <property type="project" value="Ensembl"/>
</dbReference>
<dbReference type="GO" id="GO:0008270">
    <property type="term" value="F:zinc ion binding"/>
    <property type="evidence" value="ECO:0007669"/>
    <property type="project" value="UniProtKB-KW"/>
</dbReference>
<dbReference type="GO" id="GO:0042742">
    <property type="term" value="P:defense response to bacterium"/>
    <property type="evidence" value="ECO:0000250"/>
    <property type="project" value="UniProtKB"/>
</dbReference>
<dbReference type="GO" id="GO:0060546">
    <property type="term" value="P:negative regulation of necroptotic process"/>
    <property type="evidence" value="ECO:0000316"/>
    <property type="project" value="MGI"/>
</dbReference>
<dbReference type="GO" id="GO:0043065">
    <property type="term" value="P:positive regulation of apoptotic process"/>
    <property type="evidence" value="ECO:0000315"/>
    <property type="project" value="UniProtKB"/>
</dbReference>
<dbReference type="GO" id="GO:0043123">
    <property type="term" value="P:positive regulation of canonical NF-kappaB signal transduction"/>
    <property type="evidence" value="ECO:0000315"/>
    <property type="project" value="UniProtKB"/>
</dbReference>
<dbReference type="GO" id="GO:2001238">
    <property type="term" value="P:positive regulation of extrinsic apoptotic signaling pathway"/>
    <property type="evidence" value="ECO:0000315"/>
    <property type="project" value="MGI"/>
</dbReference>
<dbReference type="GO" id="GO:1901224">
    <property type="term" value="P:positive regulation of non-canonical NF-kappaB signal transduction"/>
    <property type="evidence" value="ECO:0000315"/>
    <property type="project" value="UniProtKB"/>
</dbReference>
<dbReference type="GO" id="GO:0043161">
    <property type="term" value="P:proteasome-mediated ubiquitin-dependent protein catabolic process"/>
    <property type="evidence" value="ECO:0007669"/>
    <property type="project" value="Ensembl"/>
</dbReference>
<dbReference type="GO" id="GO:0097039">
    <property type="term" value="P:protein linear polyubiquitination"/>
    <property type="evidence" value="ECO:0000250"/>
    <property type="project" value="UniProtKB"/>
</dbReference>
<dbReference type="GO" id="GO:0000209">
    <property type="term" value="P:protein polyubiquitination"/>
    <property type="evidence" value="ECO:0000315"/>
    <property type="project" value="MGI"/>
</dbReference>
<dbReference type="GO" id="GO:0050852">
    <property type="term" value="P:T cell receptor signaling pathway"/>
    <property type="evidence" value="ECO:0007669"/>
    <property type="project" value="Ensembl"/>
</dbReference>
<dbReference type="GO" id="GO:0033209">
    <property type="term" value="P:tumor necrosis factor-mediated signaling pathway"/>
    <property type="evidence" value="ECO:0000304"/>
    <property type="project" value="MGI"/>
</dbReference>
<dbReference type="CDD" id="cd20345">
    <property type="entry name" value="BRcat_RBR_HOIL1"/>
    <property type="match status" value="1"/>
</dbReference>
<dbReference type="CDD" id="cd16633">
    <property type="entry name" value="mRING-HC-C3HC3D_RBR_HOIL1"/>
    <property type="match status" value="1"/>
</dbReference>
<dbReference type="CDD" id="cd20358">
    <property type="entry name" value="Rcat_RBR_HOIL1"/>
    <property type="match status" value="1"/>
</dbReference>
<dbReference type="CDD" id="cd01799">
    <property type="entry name" value="Ubl_HOIL1"/>
    <property type="match status" value="1"/>
</dbReference>
<dbReference type="FunFam" id="2.30.30.380:FF:000007">
    <property type="entry name" value="RanBP-type and C3HC4-type zinc finger-containing protein 1"/>
    <property type="match status" value="1"/>
</dbReference>
<dbReference type="FunFam" id="3.10.20.90:FF:000140">
    <property type="entry name" value="RanBP-type and C3HC4-type zinc finger-containing protein 1"/>
    <property type="match status" value="1"/>
</dbReference>
<dbReference type="FunFam" id="3.30.40.10:FF:000137">
    <property type="entry name" value="RanBP-type and C3HC4-type zinc finger-containing protein 1"/>
    <property type="match status" value="1"/>
</dbReference>
<dbReference type="FunFam" id="1.20.120.1750:FF:000012">
    <property type="entry name" value="ranBP-type and C3HC4-type zinc finger-containing protein 1 isoform X1"/>
    <property type="match status" value="1"/>
</dbReference>
<dbReference type="Gene3D" id="1.20.120.1750">
    <property type="match status" value="1"/>
</dbReference>
<dbReference type="Gene3D" id="3.10.20.90">
    <property type="entry name" value="Phosphatidylinositol 3-kinase Catalytic Subunit, Chain A, domain 1"/>
    <property type="match status" value="1"/>
</dbReference>
<dbReference type="Gene3D" id="3.30.40.10">
    <property type="entry name" value="Zinc/RING finger domain, C3HC4 (zinc finger)"/>
    <property type="match status" value="1"/>
</dbReference>
<dbReference type="Gene3D" id="2.30.30.380">
    <property type="entry name" value="Zn-finger domain of Sec23/24"/>
    <property type="match status" value="1"/>
</dbReference>
<dbReference type="InterPro" id="IPR047558">
    <property type="entry name" value="BRcat_RBR_HOIL1"/>
</dbReference>
<dbReference type="InterPro" id="IPR047559">
    <property type="entry name" value="HOIL1_RBR_mRING-HC-C3HC3D"/>
</dbReference>
<dbReference type="InterPro" id="IPR051628">
    <property type="entry name" value="LUBAC_E3_Ligases"/>
</dbReference>
<dbReference type="InterPro" id="IPR047557">
    <property type="entry name" value="Rcat_RBR_HOIL1"/>
</dbReference>
<dbReference type="InterPro" id="IPR044066">
    <property type="entry name" value="TRIAD_supradom"/>
</dbReference>
<dbReference type="InterPro" id="IPR000626">
    <property type="entry name" value="Ubiquitin-like_dom"/>
</dbReference>
<dbReference type="InterPro" id="IPR029071">
    <property type="entry name" value="Ubiquitin-like_domsf"/>
</dbReference>
<dbReference type="InterPro" id="IPR027370">
    <property type="entry name" value="Znf-RING_euk"/>
</dbReference>
<dbReference type="InterPro" id="IPR001876">
    <property type="entry name" value="Znf_RanBP2"/>
</dbReference>
<dbReference type="InterPro" id="IPR036443">
    <property type="entry name" value="Znf_RanBP2_sf"/>
</dbReference>
<dbReference type="InterPro" id="IPR001841">
    <property type="entry name" value="Znf_RING"/>
</dbReference>
<dbReference type="InterPro" id="IPR013083">
    <property type="entry name" value="Znf_RING/FYVE/PHD"/>
</dbReference>
<dbReference type="InterPro" id="IPR017907">
    <property type="entry name" value="Znf_RING_CS"/>
</dbReference>
<dbReference type="PANTHER" id="PTHR22770:SF35">
    <property type="entry name" value="RANBP-TYPE AND C3HC4-TYPE ZINC FINGER-CONTAINING PROTEIN 1"/>
    <property type="match status" value="1"/>
</dbReference>
<dbReference type="PANTHER" id="PTHR22770">
    <property type="entry name" value="UBIQUITIN CONJUGATING ENZYME 7 INTERACTING PROTEIN-RELATED"/>
    <property type="match status" value="1"/>
</dbReference>
<dbReference type="Pfam" id="PF25393">
    <property type="entry name" value="LTM"/>
    <property type="match status" value="1"/>
</dbReference>
<dbReference type="Pfam" id="PF13445">
    <property type="entry name" value="zf-RING_UBOX"/>
    <property type="match status" value="1"/>
</dbReference>
<dbReference type="SMART" id="SM00184">
    <property type="entry name" value="RING"/>
    <property type="match status" value="1"/>
</dbReference>
<dbReference type="SMART" id="SM00547">
    <property type="entry name" value="ZnF_RBZ"/>
    <property type="match status" value="1"/>
</dbReference>
<dbReference type="SUPFAM" id="SSF90209">
    <property type="entry name" value="Ran binding protein zinc finger-like"/>
    <property type="match status" value="1"/>
</dbReference>
<dbReference type="SUPFAM" id="SSF57850">
    <property type="entry name" value="RING/U-box"/>
    <property type="match status" value="3"/>
</dbReference>
<dbReference type="SUPFAM" id="SSF54236">
    <property type="entry name" value="Ubiquitin-like"/>
    <property type="match status" value="1"/>
</dbReference>
<dbReference type="PROSITE" id="PS51873">
    <property type="entry name" value="TRIAD"/>
    <property type="match status" value="1"/>
</dbReference>
<dbReference type="PROSITE" id="PS50053">
    <property type="entry name" value="UBIQUITIN_2"/>
    <property type="match status" value="1"/>
</dbReference>
<dbReference type="PROSITE" id="PS01358">
    <property type="entry name" value="ZF_RANBP2_1"/>
    <property type="match status" value="1"/>
</dbReference>
<dbReference type="PROSITE" id="PS50199">
    <property type="entry name" value="ZF_RANBP2_2"/>
    <property type="match status" value="1"/>
</dbReference>
<dbReference type="PROSITE" id="PS00518">
    <property type="entry name" value="ZF_RING_1"/>
    <property type="match status" value="1"/>
</dbReference>
<dbReference type="PROSITE" id="PS50089">
    <property type="entry name" value="ZF_RING_2"/>
    <property type="match status" value="1"/>
</dbReference>
<feature type="chain" id="PRO_0000056296" description="RanBP-type and C3HC4-type zinc finger-containing protein 1">
    <location>
        <begin position="1"/>
        <end position="508"/>
    </location>
</feature>
<feature type="domain" description="Ubiquitin-like" evidence="4">
    <location>
        <begin position="55"/>
        <end position="119"/>
    </location>
</feature>
<feature type="zinc finger region" description="RanBP2-type" evidence="5">
    <location>
        <begin position="188"/>
        <end position="220"/>
    </location>
</feature>
<feature type="zinc finger region" description="RING-type 1" evidence="6">
    <location>
        <begin position="280"/>
        <end position="330"/>
    </location>
</feature>
<feature type="zinc finger region" description="IBR-type" evidence="6">
    <location>
        <begin position="349"/>
        <end position="409"/>
    </location>
</feature>
<feature type="zinc finger region" description="RING-type 2; atypical" evidence="6">
    <location>
        <begin position="445"/>
        <end position="474"/>
    </location>
</feature>
<feature type="region of interest" description="Interaction with TAB2" evidence="2">
    <location>
        <begin position="1"/>
        <end position="268"/>
    </location>
</feature>
<feature type="region of interest" description="Interaction with IRF3" evidence="2">
    <location>
        <begin position="1"/>
        <end position="218"/>
    </location>
</feature>
<feature type="region of interest" description="Interaction with RNF31" evidence="2">
    <location>
        <begin position="69"/>
        <end position="131"/>
    </location>
</feature>
<feature type="region of interest" description="Disordered" evidence="7">
    <location>
        <begin position="163"/>
        <end position="191"/>
    </location>
</feature>
<feature type="region of interest" description="TRIAD supradomain" evidence="6">
    <location>
        <begin position="276"/>
        <end position="504"/>
    </location>
</feature>
<feature type="coiled-coil region" evidence="3">
    <location>
        <begin position="231"/>
        <end position="259"/>
    </location>
</feature>
<feature type="active site" evidence="6">
    <location>
        <position position="458"/>
    </location>
</feature>
<feature type="binding site" evidence="6">
    <location>
        <position position="280"/>
    </location>
    <ligand>
        <name>Zn(2+)</name>
        <dbReference type="ChEBI" id="CHEBI:29105"/>
        <label>1</label>
    </ligand>
</feature>
<feature type="binding site" evidence="6">
    <location>
        <position position="283"/>
    </location>
    <ligand>
        <name>Zn(2+)</name>
        <dbReference type="ChEBI" id="CHEBI:29105"/>
        <label>1</label>
    </ligand>
</feature>
<feature type="binding site" evidence="6">
    <location>
        <position position="298"/>
    </location>
    <ligand>
        <name>Zn(2+)</name>
        <dbReference type="ChEBI" id="CHEBI:29105"/>
        <label>2</label>
    </ligand>
</feature>
<feature type="binding site" evidence="6">
    <location>
        <position position="300"/>
    </location>
    <ligand>
        <name>Zn(2+)</name>
        <dbReference type="ChEBI" id="CHEBI:29105"/>
        <label>2</label>
    </ligand>
</feature>
<feature type="binding site" evidence="6">
    <location>
        <position position="303"/>
    </location>
    <ligand>
        <name>Zn(2+)</name>
        <dbReference type="ChEBI" id="CHEBI:29105"/>
        <label>1</label>
    </ligand>
</feature>
<feature type="binding site" evidence="6">
    <location>
        <position position="306"/>
    </location>
    <ligand>
        <name>Zn(2+)</name>
        <dbReference type="ChEBI" id="CHEBI:29105"/>
        <label>1</label>
    </ligand>
</feature>
<feature type="binding site" evidence="6">
    <location>
        <position position="321"/>
    </location>
    <ligand>
        <name>Zn(2+)</name>
        <dbReference type="ChEBI" id="CHEBI:29105"/>
        <label>2</label>
    </ligand>
</feature>
<feature type="binding site" evidence="6">
    <location>
        <position position="330"/>
    </location>
    <ligand>
        <name>Zn(2+)</name>
        <dbReference type="ChEBI" id="CHEBI:29105"/>
        <label>2</label>
    </ligand>
</feature>
<feature type="binding site" evidence="6">
    <location>
        <position position="369"/>
    </location>
    <ligand>
        <name>Zn(2+)</name>
        <dbReference type="ChEBI" id="CHEBI:29105"/>
        <label>3</label>
    </ligand>
</feature>
<feature type="binding site" evidence="6">
    <location>
        <position position="374"/>
    </location>
    <ligand>
        <name>Zn(2+)</name>
        <dbReference type="ChEBI" id="CHEBI:29105"/>
        <label>3</label>
    </ligand>
</feature>
<feature type="binding site" evidence="6">
    <location>
        <position position="389"/>
    </location>
    <ligand>
        <name>Zn(2+)</name>
        <dbReference type="ChEBI" id="CHEBI:29105"/>
        <label>3</label>
    </ligand>
</feature>
<feature type="binding site" evidence="6">
    <location>
        <position position="392"/>
    </location>
    <ligand>
        <name>Zn(2+)</name>
        <dbReference type="ChEBI" id="CHEBI:29105"/>
        <label>3</label>
    </ligand>
</feature>
<feature type="binding site" evidence="6">
    <location>
        <position position="397"/>
    </location>
    <ligand>
        <name>Zn(2+)</name>
        <dbReference type="ChEBI" id="CHEBI:29105"/>
        <label>4</label>
    </ligand>
</feature>
<feature type="binding site" evidence="6">
    <location>
        <position position="400"/>
    </location>
    <ligand>
        <name>Zn(2+)</name>
        <dbReference type="ChEBI" id="CHEBI:29105"/>
        <label>4</label>
    </ligand>
</feature>
<feature type="binding site" evidence="6">
    <location>
        <position position="404"/>
    </location>
    <ligand>
        <name>Zn(2+)</name>
        <dbReference type="ChEBI" id="CHEBI:29105"/>
        <label>4</label>
    </ligand>
</feature>
<feature type="binding site" evidence="6">
    <location>
        <position position="409"/>
    </location>
    <ligand>
        <name>Zn(2+)</name>
        <dbReference type="ChEBI" id="CHEBI:29105"/>
        <label>4</label>
    </ligand>
</feature>
<feature type="binding site" evidence="6">
    <location>
        <position position="445"/>
    </location>
    <ligand>
        <name>Zn(2+)</name>
        <dbReference type="ChEBI" id="CHEBI:29105"/>
        <label>5</label>
    </ligand>
</feature>
<feature type="binding site" evidence="6">
    <location>
        <position position="448"/>
    </location>
    <ligand>
        <name>Zn(2+)</name>
        <dbReference type="ChEBI" id="CHEBI:29105"/>
        <label>5</label>
    </ligand>
</feature>
<feature type="binding site" evidence="6">
    <location>
        <position position="463"/>
    </location>
    <ligand>
        <name>Zn(2+)</name>
        <dbReference type="ChEBI" id="CHEBI:29105"/>
        <label>5</label>
    </ligand>
</feature>
<feature type="binding site" evidence="6">
    <location>
        <position position="466"/>
    </location>
    <ligand>
        <name>Zn(2+)</name>
        <dbReference type="ChEBI" id="CHEBI:29105"/>
        <label>5</label>
    </ligand>
</feature>
<feature type="modified residue" description="N-acetylmethionine" evidence="2">
    <location>
        <position position="1"/>
    </location>
</feature>
<feature type="modified residue" description="Phosphoserine" evidence="2">
    <location>
        <position position="50"/>
    </location>
</feature>
<feature type="modified residue" description="Phosphotyrosine" evidence="13">
    <location>
        <position position="328"/>
    </location>
</feature>
<feature type="sequence conflict" description="In Ref. 1; BAE38556." evidence="12" ref="1">
    <original>P</original>
    <variation>S</variation>
    <location>
        <position position="322"/>
    </location>
</feature>
<feature type="sequence conflict" description="In Ref. 1; BAC40440." evidence="12" ref="1">
    <original>H</original>
    <variation>R</variation>
    <location>
        <position position="406"/>
    </location>
</feature>
<feature type="helix" evidence="15">
    <location>
        <begin position="5"/>
        <end position="20"/>
    </location>
</feature>
<feature type="helix" evidence="15">
    <location>
        <begin position="24"/>
        <end position="36"/>
    </location>
</feature>
<feature type="strand" evidence="15">
    <location>
        <begin position="41"/>
        <end position="45"/>
    </location>
</feature>
<feature type="strand" evidence="15">
    <location>
        <begin position="55"/>
        <end position="63"/>
    </location>
</feature>
<feature type="strand" evidence="15">
    <location>
        <begin position="68"/>
        <end position="75"/>
    </location>
</feature>
<feature type="helix" evidence="15">
    <location>
        <begin position="81"/>
        <end position="92"/>
    </location>
</feature>
<feature type="helix" evidence="15">
    <location>
        <begin position="96"/>
        <end position="98"/>
    </location>
</feature>
<feature type="strand" evidence="15">
    <location>
        <begin position="99"/>
        <end position="107"/>
    </location>
</feature>
<feature type="strand" evidence="15">
    <location>
        <begin position="112"/>
        <end position="114"/>
    </location>
</feature>
<feature type="helix" evidence="15">
    <location>
        <begin position="115"/>
        <end position="117"/>
    </location>
</feature>
<feature type="strand" evidence="15">
    <location>
        <begin position="125"/>
        <end position="130"/>
    </location>
</feature>
<feature type="strand" evidence="14">
    <location>
        <begin position="194"/>
        <end position="196"/>
    </location>
</feature>
<feature type="turn" evidence="14">
    <location>
        <begin position="198"/>
        <end position="200"/>
    </location>
</feature>
<feature type="turn" evidence="14">
    <location>
        <begin position="212"/>
        <end position="214"/>
    </location>
</feature>
<feature type="helix" evidence="14">
    <location>
        <begin position="232"/>
        <end position="245"/>
    </location>
</feature>
<proteinExistence type="evidence at protein level"/>
<keyword id="KW-0002">3D-structure</keyword>
<keyword id="KW-0007">Acetylation</keyword>
<keyword id="KW-0175">Coiled coil</keyword>
<keyword id="KW-0479">Metal-binding</keyword>
<keyword id="KW-0597">Phosphoprotein</keyword>
<keyword id="KW-1185">Reference proteome</keyword>
<keyword id="KW-0677">Repeat</keyword>
<keyword id="KW-0808">Transferase</keyword>
<keyword id="KW-0832">Ubl conjugation</keyword>
<keyword id="KW-0833">Ubl conjugation pathway</keyword>
<keyword id="KW-0862">Zinc</keyword>
<keyword id="KW-0863">Zinc-finger</keyword>
<organism>
    <name type="scientific">Mus musculus</name>
    <name type="common">Mouse</name>
    <dbReference type="NCBI Taxonomy" id="10090"/>
    <lineage>
        <taxon>Eukaryota</taxon>
        <taxon>Metazoa</taxon>
        <taxon>Chordata</taxon>
        <taxon>Craniata</taxon>
        <taxon>Vertebrata</taxon>
        <taxon>Euteleostomi</taxon>
        <taxon>Mammalia</taxon>
        <taxon>Eutheria</taxon>
        <taxon>Euarchontoglires</taxon>
        <taxon>Glires</taxon>
        <taxon>Rodentia</taxon>
        <taxon>Myomorpha</taxon>
        <taxon>Muroidea</taxon>
        <taxon>Muridae</taxon>
        <taxon>Murinae</taxon>
        <taxon>Mus</taxon>
        <taxon>Mus</taxon>
    </lineage>
</organism>